<comment type="function">
    <text evidence="1">Catalyzes the oxidation of 3-carboxy-2-hydroxy-4-methylpentanoate (3-isopropylmalate) to 3-carboxy-4-methyl-2-oxopentanoate. The product decarboxylates to 4-methyl-2 oxopentanoate (By similarity).</text>
</comment>
<comment type="catalytic activity">
    <reaction>
        <text>(2R,3S)-3-isopropylmalate + NAD(+) = 4-methyl-2-oxopentanoate + CO2 + NADH</text>
        <dbReference type="Rhea" id="RHEA:32271"/>
        <dbReference type="ChEBI" id="CHEBI:16526"/>
        <dbReference type="ChEBI" id="CHEBI:17865"/>
        <dbReference type="ChEBI" id="CHEBI:35121"/>
        <dbReference type="ChEBI" id="CHEBI:57540"/>
        <dbReference type="ChEBI" id="CHEBI:57945"/>
        <dbReference type="EC" id="1.1.1.85"/>
    </reaction>
</comment>
<comment type="cofactor">
    <cofactor evidence="1">
        <name>Mg(2+)</name>
        <dbReference type="ChEBI" id="CHEBI:18420"/>
    </cofactor>
    <cofactor evidence="1">
        <name>Mn(2+)</name>
        <dbReference type="ChEBI" id="CHEBI:29035"/>
    </cofactor>
    <text evidence="1">Binds 1 Mg(2+) or Mn(2+) ion per subunit.</text>
</comment>
<comment type="pathway">
    <text>Amino-acid biosynthesis; L-leucine biosynthesis; L-leucine from 3-methyl-2-oxobutanoate: step 3/4.</text>
</comment>
<comment type="subunit">
    <text evidence="1">Homodimer.</text>
</comment>
<comment type="subcellular location">
    <subcellularLocation>
        <location evidence="1">Cytoplasm</location>
    </subcellularLocation>
</comment>
<comment type="similarity">
    <text evidence="2">Belongs to the isocitrate and isopropylmalate dehydrogenases family. LeuB type 1 subfamily.</text>
</comment>
<name>LEU3_BUCRP</name>
<organism>
    <name type="scientific">Buchnera aphidicola subsp. Rhopalosiphum padi</name>
    <dbReference type="NCBI Taxonomy" id="98793"/>
    <lineage>
        <taxon>Bacteria</taxon>
        <taxon>Pseudomonadati</taxon>
        <taxon>Pseudomonadota</taxon>
        <taxon>Gammaproteobacteria</taxon>
        <taxon>Enterobacterales</taxon>
        <taxon>Erwiniaceae</taxon>
        <taxon>Buchnera</taxon>
    </lineage>
</organism>
<geneLocation type="plasmid">
    <name>pRPE</name>
</geneLocation>
<proteinExistence type="inferred from homology"/>
<feature type="chain" id="PRO_0000083660" description="3-isopropylmalate dehydrogenase">
    <location>
        <begin position="1"/>
        <end position="363"/>
    </location>
</feature>
<feature type="binding site" evidence="1">
    <location>
        <begin position="78"/>
        <end position="91"/>
    </location>
    <ligand>
        <name>NAD(+)</name>
        <dbReference type="ChEBI" id="CHEBI:57540"/>
    </ligand>
</feature>
<feature type="binding site" evidence="1">
    <location>
        <position position="99"/>
    </location>
    <ligand>
        <name>substrate</name>
    </ligand>
</feature>
<feature type="binding site" evidence="1">
    <location>
        <position position="109"/>
    </location>
    <ligand>
        <name>substrate</name>
    </ligand>
</feature>
<feature type="binding site" evidence="1">
    <location>
        <position position="138"/>
    </location>
    <ligand>
        <name>substrate</name>
    </ligand>
</feature>
<feature type="binding site" evidence="1">
    <location>
        <position position="227"/>
    </location>
    <ligand>
        <name>Mg(2+)</name>
        <dbReference type="ChEBI" id="CHEBI:18420"/>
    </ligand>
</feature>
<feature type="binding site" evidence="1">
    <location>
        <position position="227"/>
    </location>
    <ligand>
        <name>substrate</name>
    </ligand>
</feature>
<feature type="binding site" evidence="1">
    <location>
        <position position="251"/>
    </location>
    <ligand>
        <name>Mg(2+)</name>
        <dbReference type="ChEBI" id="CHEBI:18420"/>
    </ligand>
</feature>
<feature type="binding site" evidence="1">
    <location>
        <position position="255"/>
    </location>
    <ligand>
        <name>Mg(2+)</name>
        <dbReference type="ChEBI" id="CHEBI:18420"/>
    </ligand>
</feature>
<feature type="binding site" evidence="1">
    <location>
        <begin position="285"/>
        <end position="297"/>
    </location>
    <ligand>
        <name>NAD(+)</name>
        <dbReference type="ChEBI" id="CHEBI:57540"/>
    </ligand>
</feature>
<feature type="site" description="Important for catalysis" evidence="1">
    <location>
        <position position="145"/>
    </location>
</feature>
<feature type="site" description="Important for catalysis" evidence="1">
    <location>
        <position position="195"/>
    </location>
</feature>
<dbReference type="EC" id="1.1.1.85"/>
<dbReference type="EMBL" id="X71612">
    <property type="protein sequence ID" value="CAA50616.1"/>
    <property type="molecule type" value="Genomic_DNA"/>
</dbReference>
<dbReference type="SMR" id="P48572"/>
<dbReference type="UniPathway" id="UPA00048">
    <property type="reaction ID" value="UER00072"/>
</dbReference>
<dbReference type="GO" id="GO:0005829">
    <property type="term" value="C:cytosol"/>
    <property type="evidence" value="ECO:0007669"/>
    <property type="project" value="TreeGrafter"/>
</dbReference>
<dbReference type="GO" id="GO:0003862">
    <property type="term" value="F:3-isopropylmalate dehydrogenase activity"/>
    <property type="evidence" value="ECO:0007669"/>
    <property type="project" value="UniProtKB-UniRule"/>
</dbReference>
<dbReference type="GO" id="GO:0000287">
    <property type="term" value="F:magnesium ion binding"/>
    <property type="evidence" value="ECO:0007669"/>
    <property type="project" value="InterPro"/>
</dbReference>
<dbReference type="GO" id="GO:0051287">
    <property type="term" value="F:NAD binding"/>
    <property type="evidence" value="ECO:0007669"/>
    <property type="project" value="InterPro"/>
</dbReference>
<dbReference type="GO" id="GO:0009098">
    <property type="term" value="P:L-leucine biosynthetic process"/>
    <property type="evidence" value="ECO:0007669"/>
    <property type="project" value="UniProtKB-UniRule"/>
</dbReference>
<dbReference type="FunFam" id="3.40.718.10:FF:000006">
    <property type="entry name" value="3-isopropylmalate dehydrogenase"/>
    <property type="match status" value="1"/>
</dbReference>
<dbReference type="Gene3D" id="3.40.718.10">
    <property type="entry name" value="Isopropylmalate Dehydrogenase"/>
    <property type="match status" value="1"/>
</dbReference>
<dbReference type="HAMAP" id="MF_01033">
    <property type="entry name" value="LeuB_type1"/>
    <property type="match status" value="1"/>
</dbReference>
<dbReference type="InterPro" id="IPR019818">
    <property type="entry name" value="IsoCit/isopropylmalate_DH_CS"/>
</dbReference>
<dbReference type="InterPro" id="IPR024084">
    <property type="entry name" value="IsoPropMal-DH-like_dom"/>
</dbReference>
<dbReference type="InterPro" id="IPR004429">
    <property type="entry name" value="Isopropylmalate_DH"/>
</dbReference>
<dbReference type="NCBIfam" id="TIGR00169">
    <property type="entry name" value="leuB"/>
    <property type="match status" value="1"/>
</dbReference>
<dbReference type="PANTHER" id="PTHR42979">
    <property type="entry name" value="3-ISOPROPYLMALATE DEHYDROGENASE"/>
    <property type="match status" value="1"/>
</dbReference>
<dbReference type="PANTHER" id="PTHR42979:SF1">
    <property type="entry name" value="3-ISOPROPYLMALATE DEHYDROGENASE"/>
    <property type="match status" value="1"/>
</dbReference>
<dbReference type="Pfam" id="PF00180">
    <property type="entry name" value="Iso_dh"/>
    <property type="match status" value="1"/>
</dbReference>
<dbReference type="SMART" id="SM01329">
    <property type="entry name" value="Iso_dh"/>
    <property type="match status" value="1"/>
</dbReference>
<dbReference type="SUPFAM" id="SSF53659">
    <property type="entry name" value="Isocitrate/Isopropylmalate dehydrogenase-like"/>
    <property type="match status" value="1"/>
</dbReference>
<dbReference type="PROSITE" id="PS00470">
    <property type="entry name" value="IDH_IMDH"/>
    <property type="match status" value="1"/>
</dbReference>
<sequence length="363" mass="40530">MKKKFRIAVLPGDGIGPEIMREAYKILNILEKNFSLPLEIREFSVGGIAIDREGIALPEETLRGCENSDAILFGSVGGKKWDYLPIESRPERASLLPLRKHFNLFSNLRPAKLYSDLKNLSPLRSNIVRNGFDILCVRELTGGIYFGKPKGRSKNENGEYSFDTEIYYDFEIKRIAHLAFELASSRRCKVCSIDKSNVLASSILWREIVEEVSKNYPNIILSHLYIDNACMQIIKNPSQFDVLLCSNIFGDIISDECAMITGSIGMLPSASLNSKKFGLYEPAGGSAPDIEGKNIANPIAQILSLSMLIRHSMNLNEIADKIDSSVYRALKAGYRTLDISDGKNYIKTNEMGDIIAKFLINGK</sequence>
<reference key="1">
    <citation type="journal article" date="1995" name="J. Mol. Evol.">
        <title>Discovery and molecular characterization of a plasmid localized in Buchnera sp. bacterial endosymbiont of the aphid Rhopalosiphum padi.</title>
        <authorList>
            <person name="Bracho A.M."/>
            <person name="Martinez-Torres D."/>
            <person name="Moya A."/>
            <person name="Latorre A."/>
        </authorList>
    </citation>
    <scope>NUCLEOTIDE SEQUENCE [GENOMIC DNA]</scope>
</reference>
<accession>P48572</accession>
<evidence type="ECO:0000250" key="1"/>
<evidence type="ECO:0000305" key="2"/>
<protein>
    <recommendedName>
        <fullName>3-isopropylmalate dehydrogenase</fullName>
        <ecNumber>1.1.1.85</ecNumber>
    </recommendedName>
    <alternativeName>
        <fullName>3-IPM-DH</fullName>
    </alternativeName>
    <alternativeName>
        <fullName>Beta-IPM dehydrogenase</fullName>
        <shortName>IMDH</shortName>
    </alternativeName>
</protein>
<keyword id="KW-0028">Amino-acid biosynthesis</keyword>
<keyword id="KW-0100">Branched-chain amino acid biosynthesis</keyword>
<keyword id="KW-0963">Cytoplasm</keyword>
<keyword id="KW-0432">Leucine biosynthesis</keyword>
<keyword id="KW-0460">Magnesium</keyword>
<keyword id="KW-0464">Manganese</keyword>
<keyword id="KW-0479">Metal-binding</keyword>
<keyword id="KW-0520">NAD</keyword>
<keyword id="KW-0560">Oxidoreductase</keyword>
<keyword id="KW-0614">Plasmid</keyword>
<gene>
    <name type="primary">leuB</name>
</gene>